<comment type="function">
    <text evidence="1 2">Acts as a component of the retromer cargo-selective complex (CSC). The CSC is believed to be the core functional component of retromer or respective retromer complex variants acting to prevent missorting of selected transmembrane cargo proteins into the lysosomal degradation pathway. The recruitment of the CSC to the endosomal membrane involves RAB7A and SNX3. The SNX-BAR retromer mediates retrograde transport of cargo proteins from endosomes to the trans-Golgi network (TGN) and is involved in endosome-to-plasma membrane transport for cargo protein recycling. The SNX3-retromer mediates the retrograde endosome-to-TGN transport of WLS distinct from the SNX-BAR retromer pathway. The SNX27-retromer is believed to be involved in endosome-to-plasma membrane trafficking and recycling of a broad spectrum of cargo proteins. The CSC complex seems to act as recruitment hub for other proteins, such as the WASH complex and TBC1D5. Required for retrograde transport of lysosomal enzyme receptor IGF2R. Required to regulate transcytosis of the polymeric immunoglobulin receptor (pIgR-pIgA). Required for the endosomal localization of WASHC2 (indicative for the WASH complex). Required for the endosomal localization of TBC1D5. Mediates retromer cargo recognition of SORL1 and is involved in trafficking of SORL1 implicated in sorting and processing of APP. Involved in retromer-independent lysosomal sorting of F2R. Involved in recycling of ADRB2. Acts redundantly with VSP26B in SNX-27 mediated endocytic recycling of SLC2A1/GLUT1. Enhances the affinity of SNX27 for PDZ-binding motifs in cargo proteins (By similarity).</text>
</comment>
<comment type="subunit">
    <text evidence="1 2">Component of the heterotrimeric retromer cargo-selective complex (CSC), also described as vacuolar protein sorting subcomplex (VPS), formed by VPS26 (VPS26A or VPS26B), VPS29 and VPS35. The CSC has a highly elongated structure with VPS26 and VPS29 binding independently at opposite distal ends of VPS35 as central platform. The CSC is believed to associate with variable sorting nexins to form functionally distinct retromer complex variants. The originally described retromer complex (also called SNX-BAR retromer) is a pentamer containing the CSC and a heterodimeric membrane-deforming subcomplex formed between SNX1 or SNX2 and SNX5 or SNX6 (also called SNX-BAR subcomplex); the respective CSC and SNX-BAR subcomplexes associate with low affinity. The CSC associates with SNX3 to form a SNX3-retromer complex. The CSC associates with SNX27, the WASH complex and the SNX-BAR subcomplex to form the SNX27-retromer complex. Interacts with VPS29, VPS35, SNX27, SNX1, SNX2, SNX5, SNX6, SNX3, RAB7A, ECPAS, EHD1, WASHC5, SORL1 (By similarity).</text>
</comment>
<comment type="subcellular location">
    <subcellularLocation>
        <location evidence="2">Cytoplasm</location>
    </subcellularLocation>
    <subcellularLocation>
        <location evidence="2">Endosome membrane</location>
        <topology evidence="2">Peripheral membrane protein</topology>
    </subcellularLocation>
    <subcellularLocation>
        <location evidence="1">Early endosome</location>
    </subcellularLocation>
    <text evidence="1">Localizes to tubular profiles adjacent to endosomes. Predominantly found in early not late endosomes.</text>
</comment>
<comment type="similarity">
    <text evidence="4">Belongs to the VPS26 family.</text>
</comment>
<name>VP26A_BOVIN</name>
<dbReference type="EMBL" id="BT030523">
    <property type="protein sequence ID" value="ABQ12963.1"/>
    <property type="molecule type" value="mRNA"/>
</dbReference>
<dbReference type="EMBL" id="BC119831">
    <property type="protein sequence ID" value="AAI19832.1"/>
    <property type="molecule type" value="mRNA"/>
</dbReference>
<dbReference type="RefSeq" id="NP_001068923.1">
    <property type="nucleotide sequence ID" value="NM_001075455.1"/>
</dbReference>
<dbReference type="SMR" id="Q0VD53"/>
<dbReference type="FunCoup" id="Q0VD53">
    <property type="interactions" value="3900"/>
</dbReference>
<dbReference type="STRING" id="9913.ENSBTAP00000022455"/>
<dbReference type="PaxDb" id="9913-ENSBTAP00000022455"/>
<dbReference type="PeptideAtlas" id="Q0VD53"/>
<dbReference type="Ensembl" id="ENSBTAT00000022455.6">
    <property type="protein sequence ID" value="ENSBTAP00000022455.5"/>
    <property type="gene ID" value="ENSBTAG00000016882.7"/>
</dbReference>
<dbReference type="GeneID" id="510574"/>
<dbReference type="KEGG" id="bta:510574"/>
<dbReference type="CTD" id="9559"/>
<dbReference type="VEuPathDB" id="HostDB:ENSBTAG00000016882"/>
<dbReference type="VGNC" id="VGNC:36814">
    <property type="gene designation" value="VPS26A"/>
</dbReference>
<dbReference type="eggNOG" id="KOG3063">
    <property type="taxonomic scope" value="Eukaryota"/>
</dbReference>
<dbReference type="GeneTree" id="ENSGT00950000183064"/>
<dbReference type="HOGENOM" id="CLU_031077_0_0_1"/>
<dbReference type="InParanoid" id="Q0VD53"/>
<dbReference type="OMA" id="AGKVCIE"/>
<dbReference type="OrthoDB" id="3821113at2759"/>
<dbReference type="TreeFam" id="TF300907"/>
<dbReference type="Reactome" id="R-BTA-3238698">
    <property type="pathway name" value="WNT ligand biogenesis and trafficking"/>
</dbReference>
<dbReference type="Proteomes" id="UP000009136">
    <property type="component" value="Chromosome 28"/>
</dbReference>
<dbReference type="Bgee" id="ENSBTAG00000016882">
    <property type="expression patterns" value="Expressed in spermatid and 107 other cell types or tissues"/>
</dbReference>
<dbReference type="GO" id="GO:0005829">
    <property type="term" value="C:cytosol"/>
    <property type="evidence" value="ECO:0007669"/>
    <property type="project" value="GOC"/>
</dbReference>
<dbReference type="GO" id="GO:0005769">
    <property type="term" value="C:early endosome"/>
    <property type="evidence" value="ECO:0000250"/>
    <property type="project" value="UniProtKB"/>
</dbReference>
<dbReference type="GO" id="GO:0005768">
    <property type="term" value="C:endosome"/>
    <property type="evidence" value="ECO:0000250"/>
    <property type="project" value="UniProtKB"/>
</dbReference>
<dbReference type="GO" id="GO:0010008">
    <property type="term" value="C:endosome membrane"/>
    <property type="evidence" value="ECO:0007669"/>
    <property type="project" value="UniProtKB-SubCell"/>
</dbReference>
<dbReference type="GO" id="GO:0030904">
    <property type="term" value="C:retromer complex"/>
    <property type="evidence" value="ECO:0000318"/>
    <property type="project" value="GO_Central"/>
</dbReference>
<dbReference type="GO" id="GO:0097422">
    <property type="term" value="C:tubular endosome"/>
    <property type="evidence" value="ECO:0000250"/>
    <property type="project" value="UniProtKB"/>
</dbReference>
<dbReference type="GO" id="GO:0031982">
    <property type="term" value="C:vesicle"/>
    <property type="evidence" value="ECO:0000250"/>
    <property type="project" value="UniProtKB"/>
</dbReference>
<dbReference type="GO" id="GO:0032456">
    <property type="term" value="P:endocytic recycling"/>
    <property type="evidence" value="ECO:0000250"/>
    <property type="project" value="UniProtKB"/>
</dbReference>
<dbReference type="GO" id="GO:0006886">
    <property type="term" value="P:intracellular protein transport"/>
    <property type="evidence" value="ECO:0000318"/>
    <property type="project" value="GO_Central"/>
</dbReference>
<dbReference type="GO" id="GO:0042147">
    <property type="term" value="P:retrograde transport, endosome to Golgi"/>
    <property type="evidence" value="ECO:0000250"/>
    <property type="project" value="UniProtKB"/>
</dbReference>
<dbReference type="FunFam" id="2.60.40.640:FF:000001">
    <property type="entry name" value="Vacuolar protein sorting-associated protein 26A"/>
    <property type="match status" value="1"/>
</dbReference>
<dbReference type="FunFam" id="2.60.40.640:FF:000002">
    <property type="entry name" value="Vacuolar protein sorting-associated protein 26A"/>
    <property type="match status" value="1"/>
</dbReference>
<dbReference type="Gene3D" id="2.60.40.640">
    <property type="match status" value="2"/>
</dbReference>
<dbReference type="InterPro" id="IPR014752">
    <property type="entry name" value="Arrestin-like_C"/>
</dbReference>
<dbReference type="InterPro" id="IPR028934">
    <property type="entry name" value="Vps26-related"/>
</dbReference>
<dbReference type="PANTHER" id="PTHR12233">
    <property type="entry name" value="VACUOLAR PROTEIN SORTING 26 RELATED"/>
    <property type="match status" value="1"/>
</dbReference>
<dbReference type="Pfam" id="PF03643">
    <property type="entry name" value="Vps26"/>
    <property type="match status" value="1"/>
</dbReference>
<feature type="chain" id="PRO_0000283790" description="Vacuolar protein sorting-associated protein 26A">
    <location>
        <begin position="1"/>
        <end position="327"/>
    </location>
</feature>
<feature type="region of interest" description="Disordered" evidence="3">
    <location>
        <begin position="306"/>
        <end position="327"/>
    </location>
</feature>
<feature type="compositionally biased region" description="Polar residues" evidence="3">
    <location>
        <begin position="316"/>
        <end position="327"/>
    </location>
</feature>
<feature type="modified residue" description="Phosphoserine" evidence="1">
    <location>
        <position position="315"/>
    </location>
</feature>
<accession>Q0VD53</accession>
<accession>A5D9A4</accession>
<gene>
    <name type="primary">VPS26A</name>
</gene>
<organism>
    <name type="scientific">Bos taurus</name>
    <name type="common">Bovine</name>
    <dbReference type="NCBI Taxonomy" id="9913"/>
    <lineage>
        <taxon>Eukaryota</taxon>
        <taxon>Metazoa</taxon>
        <taxon>Chordata</taxon>
        <taxon>Craniata</taxon>
        <taxon>Vertebrata</taxon>
        <taxon>Euteleostomi</taxon>
        <taxon>Mammalia</taxon>
        <taxon>Eutheria</taxon>
        <taxon>Laurasiatheria</taxon>
        <taxon>Artiodactyla</taxon>
        <taxon>Ruminantia</taxon>
        <taxon>Pecora</taxon>
        <taxon>Bovidae</taxon>
        <taxon>Bovinae</taxon>
        <taxon>Bos</taxon>
    </lineage>
</organism>
<reference key="1">
    <citation type="journal article" date="2005" name="BMC Genomics">
        <title>Characterization of 954 bovine full-CDS cDNA sequences.</title>
        <authorList>
            <person name="Harhay G.P."/>
            <person name="Sonstegard T.S."/>
            <person name="Keele J.W."/>
            <person name="Heaton M.P."/>
            <person name="Clawson M.L."/>
            <person name="Snelling W.M."/>
            <person name="Wiedmann R.T."/>
            <person name="Van Tassell C.P."/>
            <person name="Smith T.P.L."/>
        </authorList>
    </citation>
    <scope>NUCLEOTIDE SEQUENCE [LARGE SCALE MRNA]</scope>
</reference>
<reference key="2">
    <citation type="submission" date="2006-08" db="EMBL/GenBank/DDBJ databases">
        <authorList>
            <consortium name="NIH - Mammalian Gene Collection (MGC) project"/>
        </authorList>
    </citation>
    <scope>NUCLEOTIDE SEQUENCE [LARGE SCALE MRNA]</scope>
    <source>
        <strain>Hereford</strain>
        <tissue>Ascending colon</tissue>
    </source>
</reference>
<proteinExistence type="evidence at transcript level"/>
<protein>
    <recommendedName>
        <fullName>Vacuolar protein sorting-associated protein 26A</fullName>
    </recommendedName>
    <alternativeName>
        <fullName>Vesicle protein sorting 26A</fullName>
    </alternativeName>
</protein>
<keyword id="KW-0963">Cytoplasm</keyword>
<keyword id="KW-0967">Endosome</keyword>
<keyword id="KW-0472">Membrane</keyword>
<keyword id="KW-0597">Phosphoprotein</keyword>
<keyword id="KW-0653">Protein transport</keyword>
<keyword id="KW-1185">Reference proteome</keyword>
<keyword id="KW-0813">Transport</keyword>
<evidence type="ECO:0000250" key="1">
    <source>
        <dbReference type="UniProtKB" id="O75436"/>
    </source>
</evidence>
<evidence type="ECO:0000250" key="2">
    <source>
        <dbReference type="UniProtKB" id="P40336"/>
    </source>
</evidence>
<evidence type="ECO:0000256" key="3">
    <source>
        <dbReference type="SAM" id="MobiDB-lite"/>
    </source>
</evidence>
<evidence type="ECO:0000305" key="4"/>
<sequence length="327" mass="38156">MSFLGGFFGPICEIDVVLNDGETRKMAEMKTEDGKVEKHYLFYDGESVSGKVNLAFKQPGKRLEHQGIRIEFVGQIELFNDKSNTHEFVNLVKELALPGELTQSRSYDFEFMQVEKPYESYIGANVRLRYFLKVTIVRRLTDLVKEYDLIVHQLATYPDVNNSIKMEVGIEDCLHIEFEYNKSKYHLKDVIVGKIYFLLVRIKIQHMELQLIKKEITGIGPSTTTETETIAKYEIMDGAPVKGESIPIRLFLAGYDPTPTMRDVNKKFSVRYFLNLVLVDEEDRRYFKQQEIILWRKAPEKLRKQRTNFHQRFESPESQASAEQPEM</sequence>